<feature type="chain" id="PRO_0000096111" description="Single-stranded DNA-binding protein 3">
    <location>
        <begin position="1"/>
        <end position="138"/>
    </location>
</feature>
<feature type="domain" description="SSB" evidence="1">
    <location>
        <begin position="1"/>
        <end position="104"/>
    </location>
</feature>
<feature type="region of interest" description="Disordered" evidence="2">
    <location>
        <begin position="105"/>
        <end position="138"/>
    </location>
</feature>
<feature type="short sequence motif" description="Important for interaction with partner proteins" evidence="1">
    <location>
        <begin position="133"/>
        <end position="138"/>
    </location>
</feature>
<feature type="compositionally biased region" description="Low complexity" evidence="2">
    <location>
        <begin position="105"/>
        <end position="121"/>
    </location>
</feature>
<comment type="function">
    <text evidence="1">Plays an important role in DNA replication, recombination and repair. Binds to ssDNA and to an array of partner proteins to recruit them to their sites of action during DNA metabolism.</text>
</comment>
<comment type="subunit">
    <text evidence="1">Homotetramer.</text>
</comment>
<dbReference type="EMBL" id="AE009948">
    <property type="protein sequence ID" value="AAM99467.1"/>
    <property type="molecule type" value="Genomic_DNA"/>
</dbReference>
<dbReference type="RefSeq" id="NP_687595.1">
    <property type="nucleotide sequence ID" value="NC_004116.1"/>
</dbReference>
<dbReference type="RefSeq" id="WP_000609377.1">
    <property type="nucleotide sequence ID" value="NC_004116.1"/>
</dbReference>
<dbReference type="SMR" id="Q8E0Z9"/>
<dbReference type="STRING" id="208435.SAG0566"/>
<dbReference type="KEGG" id="sag:SAG0566"/>
<dbReference type="PATRIC" id="fig|208435.3.peg.562"/>
<dbReference type="HOGENOM" id="CLU_078758_6_1_9"/>
<dbReference type="OrthoDB" id="9809878at2"/>
<dbReference type="Proteomes" id="UP000000821">
    <property type="component" value="Chromosome"/>
</dbReference>
<dbReference type="GO" id="GO:0009295">
    <property type="term" value="C:nucleoid"/>
    <property type="evidence" value="ECO:0007669"/>
    <property type="project" value="TreeGrafter"/>
</dbReference>
<dbReference type="GO" id="GO:0003697">
    <property type="term" value="F:single-stranded DNA binding"/>
    <property type="evidence" value="ECO:0007669"/>
    <property type="project" value="UniProtKB-UniRule"/>
</dbReference>
<dbReference type="GO" id="GO:0006310">
    <property type="term" value="P:DNA recombination"/>
    <property type="evidence" value="ECO:0007669"/>
    <property type="project" value="UniProtKB-UniRule"/>
</dbReference>
<dbReference type="GO" id="GO:0006281">
    <property type="term" value="P:DNA repair"/>
    <property type="evidence" value="ECO:0007669"/>
    <property type="project" value="UniProtKB-UniRule"/>
</dbReference>
<dbReference type="GO" id="GO:0006260">
    <property type="term" value="P:DNA replication"/>
    <property type="evidence" value="ECO:0007669"/>
    <property type="project" value="UniProtKB-UniRule"/>
</dbReference>
<dbReference type="CDD" id="cd04496">
    <property type="entry name" value="SSB_OBF"/>
    <property type="match status" value="1"/>
</dbReference>
<dbReference type="FunFam" id="2.40.50.140:FF:000084">
    <property type="entry name" value="Single-stranded DNA-binding protein"/>
    <property type="match status" value="1"/>
</dbReference>
<dbReference type="Gene3D" id="2.40.50.140">
    <property type="entry name" value="Nucleic acid-binding proteins"/>
    <property type="match status" value="1"/>
</dbReference>
<dbReference type="HAMAP" id="MF_00984">
    <property type="entry name" value="SSB"/>
    <property type="match status" value="1"/>
</dbReference>
<dbReference type="InterPro" id="IPR012340">
    <property type="entry name" value="NA-bd_OB-fold"/>
</dbReference>
<dbReference type="InterPro" id="IPR000424">
    <property type="entry name" value="Primosome_PriB/ssb"/>
</dbReference>
<dbReference type="InterPro" id="IPR011344">
    <property type="entry name" value="ssDNA-bd"/>
</dbReference>
<dbReference type="NCBIfam" id="TIGR00621">
    <property type="entry name" value="ssb"/>
    <property type="match status" value="1"/>
</dbReference>
<dbReference type="PANTHER" id="PTHR10302">
    <property type="entry name" value="SINGLE-STRANDED DNA-BINDING PROTEIN"/>
    <property type="match status" value="1"/>
</dbReference>
<dbReference type="PANTHER" id="PTHR10302:SF27">
    <property type="entry name" value="SINGLE-STRANDED DNA-BINDING PROTEIN"/>
    <property type="match status" value="1"/>
</dbReference>
<dbReference type="Pfam" id="PF00436">
    <property type="entry name" value="SSB"/>
    <property type="match status" value="1"/>
</dbReference>
<dbReference type="PIRSF" id="PIRSF002070">
    <property type="entry name" value="SSB"/>
    <property type="match status" value="1"/>
</dbReference>
<dbReference type="SUPFAM" id="SSF50249">
    <property type="entry name" value="Nucleic acid-binding proteins"/>
    <property type="match status" value="1"/>
</dbReference>
<dbReference type="PROSITE" id="PS50935">
    <property type="entry name" value="SSB"/>
    <property type="match status" value="1"/>
</dbReference>
<evidence type="ECO:0000255" key="1">
    <source>
        <dbReference type="HAMAP-Rule" id="MF_00984"/>
    </source>
</evidence>
<evidence type="ECO:0000256" key="2">
    <source>
        <dbReference type="SAM" id="MobiDB-lite"/>
    </source>
</evidence>
<proteinExistence type="inferred from homology"/>
<name>SSB3_STRA5</name>
<keyword id="KW-0227">DNA damage</keyword>
<keyword id="KW-0233">DNA recombination</keyword>
<keyword id="KW-0234">DNA repair</keyword>
<keyword id="KW-0235">DNA replication</keyword>
<keyword id="KW-0238">DNA-binding</keyword>
<keyword id="KW-1185">Reference proteome</keyword>
<sequence length="138" mass="15626">MINNIVLVGRMTKDAELRYTPSNQAVATFSLAVNRNFKNQSGEREADFINCVIWRQQAENLANWAKKGALVGITGRIQTRNYENQQGQRIYVTEVVAENFQLLESRNSQQQTNQSGNSSNSYFGNANKMDISDDDLPF</sequence>
<reference key="1">
    <citation type="journal article" date="2002" name="Proc. Natl. Acad. Sci. U.S.A.">
        <title>Complete genome sequence and comparative genomic analysis of an emerging human pathogen, serotype V Streptococcus agalactiae.</title>
        <authorList>
            <person name="Tettelin H."/>
            <person name="Masignani V."/>
            <person name="Cieslewicz M.J."/>
            <person name="Eisen J.A."/>
            <person name="Peterson S.N."/>
            <person name="Wessels M.R."/>
            <person name="Paulsen I.T."/>
            <person name="Nelson K.E."/>
            <person name="Margarit I."/>
            <person name="Read T.D."/>
            <person name="Madoff L.C."/>
            <person name="Wolf A.M."/>
            <person name="Beanan M.J."/>
            <person name="Brinkac L.M."/>
            <person name="Daugherty S.C."/>
            <person name="DeBoy R.T."/>
            <person name="Durkin A.S."/>
            <person name="Kolonay J.F."/>
            <person name="Madupu R."/>
            <person name="Lewis M.R."/>
            <person name="Radune D."/>
            <person name="Fedorova N.B."/>
            <person name="Scanlan D."/>
            <person name="Khouri H.M."/>
            <person name="Mulligan S."/>
            <person name="Carty H.A."/>
            <person name="Cline R.T."/>
            <person name="Van Aken S.E."/>
            <person name="Gill J."/>
            <person name="Scarselli M."/>
            <person name="Mora M."/>
            <person name="Iacobini E.T."/>
            <person name="Brettoni C."/>
            <person name="Galli G."/>
            <person name="Mariani M."/>
            <person name="Vegni F."/>
            <person name="Maione D."/>
            <person name="Rinaudo D."/>
            <person name="Rappuoli R."/>
            <person name="Telford J.L."/>
            <person name="Kasper D.L."/>
            <person name="Grandi G."/>
            <person name="Fraser C.M."/>
        </authorList>
    </citation>
    <scope>NUCLEOTIDE SEQUENCE [LARGE SCALE GENOMIC DNA]</scope>
    <source>
        <strain>ATCC BAA-611 / 2603 V/R</strain>
    </source>
</reference>
<organism>
    <name type="scientific">Streptococcus agalactiae serotype V (strain ATCC BAA-611 / 2603 V/R)</name>
    <dbReference type="NCBI Taxonomy" id="208435"/>
    <lineage>
        <taxon>Bacteria</taxon>
        <taxon>Bacillati</taxon>
        <taxon>Bacillota</taxon>
        <taxon>Bacilli</taxon>
        <taxon>Lactobacillales</taxon>
        <taxon>Streptococcaceae</taxon>
        <taxon>Streptococcus</taxon>
    </lineage>
</organism>
<accession>Q8E0Z9</accession>
<protein>
    <recommendedName>
        <fullName evidence="1">Single-stranded DNA-binding protein 3</fullName>
        <shortName evidence="1">SSB 3</shortName>
    </recommendedName>
</protein>
<gene>
    <name type="primary">ssb3</name>
    <name type="ordered locus">SAG0566</name>
</gene>